<organism>
    <name type="scientific">Mus musculus</name>
    <name type="common">Mouse</name>
    <dbReference type="NCBI Taxonomy" id="10090"/>
    <lineage>
        <taxon>Eukaryota</taxon>
        <taxon>Metazoa</taxon>
        <taxon>Chordata</taxon>
        <taxon>Craniata</taxon>
        <taxon>Vertebrata</taxon>
        <taxon>Euteleostomi</taxon>
        <taxon>Mammalia</taxon>
        <taxon>Eutheria</taxon>
        <taxon>Euarchontoglires</taxon>
        <taxon>Glires</taxon>
        <taxon>Rodentia</taxon>
        <taxon>Myomorpha</taxon>
        <taxon>Muroidea</taxon>
        <taxon>Muridae</taxon>
        <taxon>Murinae</taxon>
        <taxon>Mus</taxon>
        <taxon>Mus</taxon>
    </lineage>
</organism>
<proteinExistence type="evidence at transcript level"/>
<reference key="1">
    <citation type="journal article" date="2001" name="Immunol. Cell Biol.">
        <title>Cloning and characterization of a mouse homologue of the human haematopoietic cell-specific four-transmembrane gene HTm4.</title>
        <authorList>
            <person name="Hulett M.D."/>
            <person name="Pagler E."/>
            <person name="Hornby J.R."/>
        </authorList>
    </citation>
    <scope>NUCLEOTIDE SEQUENCE [MRNA]</scope>
    <source>
        <strain>C57BL/6J</strain>
        <tissue>Spleen</tissue>
    </source>
</reference>
<reference key="2">
    <citation type="journal article" date="2005" name="Science">
        <title>The transcriptional landscape of the mammalian genome.</title>
        <authorList>
            <person name="Carninci P."/>
            <person name="Kasukawa T."/>
            <person name="Katayama S."/>
            <person name="Gough J."/>
            <person name="Frith M.C."/>
            <person name="Maeda N."/>
            <person name="Oyama R."/>
            <person name="Ravasi T."/>
            <person name="Lenhard B."/>
            <person name="Wells C."/>
            <person name="Kodzius R."/>
            <person name="Shimokawa K."/>
            <person name="Bajic V.B."/>
            <person name="Brenner S.E."/>
            <person name="Batalov S."/>
            <person name="Forrest A.R."/>
            <person name="Zavolan M."/>
            <person name="Davis M.J."/>
            <person name="Wilming L.G."/>
            <person name="Aidinis V."/>
            <person name="Allen J.E."/>
            <person name="Ambesi-Impiombato A."/>
            <person name="Apweiler R."/>
            <person name="Aturaliya R.N."/>
            <person name="Bailey T.L."/>
            <person name="Bansal M."/>
            <person name="Baxter L."/>
            <person name="Beisel K.W."/>
            <person name="Bersano T."/>
            <person name="Bono H."/>
            <person name="Chalk A.M."/>
            <person name="Chiu K.P."/>
            <person name="Choudhary V."/>
            <person name="Christoffels A."/>
            <person name="Clutterbuck D.R."/>
            <person name="Crowe M.L."/>
            <person name="Dalla E."/>
            <person name="Dalrymple B.P."/>
            <person name="de Bono B."/>
            <person name="Della Gatta G."/>
            <person name="di Bernardo D."/>
            <person name="Down T."/>
            <person name="Engstrom P."/>
            <person name="Fagiolini M."/>
            <person name="Faulkner G."/>
            <person name="Fletcher C.F."/>
            <person name="Fukushima T."/>
            <person name="Furuno M."/>
            <person name="Futaki S."/>
            <person name="Gariboldi M."/>
            <person name="Georgii-Hemming P."/>
            <person name="Gingeras T.R."/>
            <person name="Gojobori T."/>
            <person name="Green R.E."/>
            <person name="Gustincich S."/>
            <person name="Harbers M."/>
            <person name="Hayashi Y."/>
            <person name="Hensch T.K."/>
            <person name="Hirokawa N."/>
            <person name="Hill D."/>
            <person name="Huminiecki L."/>
            <person name="Iacono M."/>
            <person name="Ikeo K."/>
            <person name="Iwama A."/>
            <person name="Ishikawa T."/>
            <person name="Jakt M."/>
            <person name="Kanapin A."/>
            <person name="Katoh M."/>
            <person name="Kawasawa Y."/>
            <person name="Kelso J."/>
            <person name="Kitamura H."/>
            <person name="Kitano H."/>
            <person name="Kollias G."/>
            <person name="Krishnan S.P."/>
            <person name="Kruger A."/>
            <person name="Kummerfeld S.K."/>
            <person name="Kurochkin I.V."/>
            <person name="Lareau L.F."/>
            <person name="Lazarevic D."/>
            <person name="Lipovich L."/>
            <person name="Liu J."/>
            <person name="Liuni S."/>
            <person name="McWilliam S."/>
            <person name="Madan Babu M."/>
            <person name="Madera M."/>
            <person name="Marchionni L."/>
            <person name="Matsuda H."/>
            <person name="Matsuzawa S."/>
            <person name="Miki H."/>
            <person name="Mignone F."/>
            <person name="Miyake S."/>
            <person name="Morris K."/>
            <person name="Mottagui-Tabar S."/>
            <person name="Mulder N."/>
            <person name="Nakano N."/>
            <person name="Nakauchi H."/>
            <person name="Ng P."/>
            <person name="Nilsson R."/>
            <person name="Nishiguchi S."/>
            <person name="Nishikawa S."/>
            <person name="Nori F."/>
            <person name="Ohara O."/>
            <person name="Okazaki Y."/>
            <person name="Orlando V."/>
            <person name="Pang K.C."/>
            <person name="Pavan W.J."/>
            <person name="Pavesi G."/>
            <person name="Pesole G."/>
            <person name="Petrovsky N."/>
            <person name="Piazza S."/>
            <person name="Reed J."/>
            <person name="Reid J.F."/>
            <person name="Ring B.Z."/>
            <person name="Ringwald M."/>
            <person name="Rost B."/>
            <person name="Ruan Y."/>
            <person name="Salzberg S.L."/>
            <person name="Sandelin A."/>
            <person name="Schneider C."/>
            <person name="Schoenbach C."/>
            <person name="Sekiguchi K."/>
            <person name="Semple C.A."/>
            <person name="Seno S."/>
            <person name="Sessa L."/>
            <person name="Sheng Y."/>
            <person name="Shibata Y."/>
            <person name="Shimada H."/>
            <person name="Shimada K."/>
            <person name="Silva D."/>
            <person name="Sinclair B."/>
            <person name="Sperling S."/>
            <person name="Stupka E."/>
            <person name="Sugiura K."/>
            <person name="Sultana R."/>
            <person name="Takenaka Y."/>
            <person name="Taki K."/>
            <person name="Tammoja K."/>
            <person name="Tan S.L."/>
            <person name="Tang S."/>
            <person name="Taylor M.S."/>
            <person name="Tegner J."/>
            <person name="Teichmann S.A."/>
            <person name="Ueda H.R."/>
            <person name="van Nimwegen E."/>
            <person name="Verardo R."/>
            <person name="Wei C.L."/>
            <person name="Yagi K."/>
            <person name="Yamanishi H."/>
            <person name="Zabarovsky E."/>
            <person name="Zhu S."/>
            <person name="Zimmer A."/>
            <person name="Hide W."/>
            <person name="Bult C."/>
            <person name="Grimmond S.M."/>
            <person name="Teasdale R.D."/>
            <person name="Liu E.T."/>
            <person name="Brusic V."/>
            <person name="Quackenbush J."/>
            <person name="Wahlestedt C."/>
            <person name="Mattick J.S."/>
            <person name="Hume D.A."/>
            <person name="Kai C."/>
            <person name="Sasaki D."/>
            <person name="Tomaru Y."/>
            <person name="Fukuda S."/>
            <person name="Kanamori-Katayama M."/>
            <person name="Suzuki M."/>
            <person name="Aoki J."/>
            <person name="Arakawa T."/>
            <person name="Iida J."/>
            <person name="Imamura K."/>
            <person name="Itoh M."/>
            <person name="Kato T."/>
            <person name="Kawaji H."/>
            <person name="Kawagashira N."/>
            <person name="Kawashima T."/>
            <person name="Kojima M."/>
            <person name="Kondo S."/>
            <person name="Konno H."/>
            <person name="Nakano K."/>
            <person name="Ninomiya N."/>
            <person name="Nishio T."/>
            <person name="Okada M."/>
            <person name="Plessy C."/>
            <person name="Shibata K."/>
            <person name="Shiraki T."/>
            <person name="Suzuki S."/>
            <person name="Tagami M."/>
            <person name="Waki K."/>
            <person name="Watahiki A."/>
            <person name="Okamura-Oho Y."/>
            <person name="Suzuki H."/>
            <person name="Kawai J."/>
            <person name="Hayashizaki Y."/>
        </authorList>
    </citation>
    <scope>NUCLEOTIDE SEQUENCE [LARGE SCALE MRNA]</scope>
    <source>
        <strain>C57BL/6J</strain>
        <tissue>Bone</tissue>
    </source>
</reference>
<reference key="3">
    <citation type="journal article" date="2001" name="Genomics">
        <title>Identification of a CD20-, Fc-epsilon-RI-beta-, and HTm4-related gene family: sixteen new MS4A family members expressed in human and mouse.</title>
        <authorList>
            <person name="Liang Y."/>
            <person name="Tedder T.F."/>
        </authorList>
    </citation>
    <scope>NUCLEOTIDE SEQUENCE [MRNA] OF 1-124</scope>
    <source>
        <strain>C57BL/6J</strain>
        <tissue>Bone marrow</tissue>
    </source>
</reference>
<accession>Q920C4</accession>
<accession>Q99MX6</accession>
<feature type="chain" id="PRO_0000158633" description="Membrane-spanning 4-domains subfamily A member 3">
    <location>
        <begin position="1"/>
        <end position="213"/>
    </location>
</feature>
<feature type="topological domain" description="Cytoplasmic" evidence="2">
    <location>
        <begin position="1"/>
        <end position="26"/>
    </location>
</feature>
<feature type="transmembrane region" description="Helical" evidence="2">
    <location>
        <begin position="27"/>
        <end position="47"/>
    </location>
</feature>
<feature type="topological domain" description="Extracellular" evidence="2">
    <location>
        <begin position="48"/>
        <end position="58"/>
    </location>
</feature>
<feature type="transmembrane region" description="Helical" evidence="2">
    <location>
        <begin position="59"/>
        <end position="79"/>
    </location>
</feature>
<feature type="topological domain" description="Cytoplasmic" evidence="2">
    <location>
        <begin position="80"/>
        <end position="97"/>
    </location>
</feature>
<feature type="transmembrane region" description="Helical" evidence="2">
    <location>
        <begin position="98"/>
        <end position="118"/>
    </location>
</feature>
<feature type="topological domain" description="Extracellular" evidence="2">
    <location>
        <begin position="119"/>
        <end position="148"/>
    </location>
</feature>
<feature type="transmembrane region" description="Helical" evidence="2">
    <location>
        <begin position="149"/>
        <end position="169"/>
    </location>
</feature>
<feature type="topological domain" description="Cytoplasmic" evidence="2">
    <location>
        <begin position="170"/>
        <end position="213"/>
    </location>
</feature>
<feature type="region of interest" description="Disordered" evidence="3">
    <location>
        <begin position="189"/>
        <end position="213"/>
    </location>
</feature>
<feature type="compositionally biased region" description="Polar residues" evidence="3">
    <location>
        <begin position="201"/>
        <end position="213"/>
    </location>
</feature>
<comment type="function">
    <text evidence="1">Hematopoietic modulator for the G1-S cell cycle transition. Modulates the level of phosphorylation of cyclin-dependent kinase 2 (CDK2) through its direct binding to cyclin-dependent kinase inhibitor 3 (CDKN3/KAP) (By similarity).</text>
</comment>
<comment type="subunit">
    <text evidence="1">Interacts with CDKN3. Interacts with CDKN3-CDK2 complexes through its binding to CDKN3; this interaction facilitates dissociation of cyclin A from CDKN3-CDK2 complexes (By similarity).</text>
</comment>
<comment type="subcellular location">
    <subcellularLocation>
        <location>Membrane</location>
        <topology>Multi-pass membrane protein</topology>
    </subcellularLocation>
</comment>
<comment type="tissue specificity">
    <text>Expressed at low levels only in specific immune tissues, such as, spleen, bone marrow and peripheral blood leukocytes.</text>
</comment>
<comment type="domain">
    <text evidence="1">The C-terminal region is required for binding to CDKN3-CDK2 complexes and the modulation of CDKN3 activity.</text>
</comment>
<comment type="similarity">
    <text evidence="4">Belongs to the MS4A family.</text>
</comment>
<evidence type="ECO:0000250" key="1"/>
<evidence type="ECO:0000255" key="2"/>
<evidence type="ECO:0000256" key="3">
    <source>
        <dbReference type="SAM" id="MobiDB-lite"/>
    </source>
</evidence>
<evidence type="ECO:0000305" key="4"/>
<keyword id="KW-0472">Membrane</keyword>
<keyword id="KW-0675">Receptor</keyword>
<keyword id="KW-1185">Reference proteome</keyword>
<keyword id="KW-0812">Transmembrane</keyword>
<keyword id="KW-1133">Transmembrane helix</keyword>
<dbReference type="EMBL" id="AF321128">
    <property type="protein sequence ID" value="AAL16955.1"/>
    <property type="molecule type" value="mRNA"/>
</dbReference>
<dbReference type="EMBL" id="AK036464">
    <property type="protein sequence ID" value="BAC29440.1"/>
    <property type="molecule type" value="mRNA"/>
</dbReference>
<dbReference type="EMBL" id="AF280401">
    <property type="protein sequence ID" value="AAK37993.1"/>
    <property type="molecule type" value="mRNA"/>
</dbReference>
<dbReference type="CCDS" id="CCDS29605.1"/>
<dbReference type="RefSeq" id="NP_573509.1">
    <property type="nucleotide sequence ID" value="NM_133246.5"/>
</dbReference>
<dbReference type="SMR" id="Q920C4"/>
<dbReference type="FunCoup" id="Q920C4">
    <property type="interactions" value="31"/>
</dbReference>
<dbReference type="STRING" id="10090.ENSMUSP00000108608"/>
<dbReference type="PhosphoSitePlus" id="Q920C4"/>
<dbReference type="PaxDb" id="10090-ENSMUSP00000108608"/>
<dbReference type="Antibodypedia" id="14413">
    <property type="antibodies" value="160 antibodies from 23 providers"/>
</dbReference>
<dbReference type="DNASU" id="170813"/>
<dbReference type="Ensembl" id="ENSMUST00000112984.4">
    <property type="protein sequence ID" value="ENSMUSP00000108608.3"/>
    <property type="gene ID" value="ENSMUSG00000024681.12"/>
</dbReference>
<dbReference type="Ensembl" id="ENSMUST00000186023.7">
    <property type="protein sequence ID" value="ENSMUSP00000140508.2"/>
    <property type="gene ID" value="ENSMUSG00000024681.12"/>
</dbReference>
<dbReference type="GeneID" id="170813"/>
<dbReference type="KEGG" id="mmu:170813"/>
<dbReference type="UCSC" id="uc008gsp.2">
    <property type="organism name" value="mouse"/>
</dbReference>
<dbReference type="AGR" id="MGI:2158468"/>
<dbReference type="CTD" id="932"/>
<dbReference type="MGI" id="MGI:2158468">
    <property type="gene designation" value="Ms4a3"/>
</dbReference>
<dbReference type="VEuPathDB" id="HostDB:ENSMUSG00000024681"/>
<dbReference type="eggNOG" id="ENOG502T41X">
    <property type="taxonomic scope" value="Eukaryota"/>
</dbReference>
<dbReference type="GeneTree" id="ENSGT00940000162383"/>
<dbReference type="HOGENOM" id="CLU_091032_6_0_1"/>
<dbReference type="InParanoid" id="Q920C4"/>
<dbReference type="OMA" id="TFHTGYP"/>
<dbReference type="OrthoDB" id="10071849at2759"/>
<dbReference type="PhylomeDB" id="Q920C4"/>
<dbReference type="TreeFam" id="TF335157"/>
<dbReference type="Reactome" id="R-MMU-6798695">
    <property type="pathway name" value="Neutrophil degranulation"/>
</dbReference>
<dbReference type="BioGRID-ORCS" id="170813">
    <property type="hits" value="3 hits in 78 CRISPR screens"/>
</dbReference>
<dbReference type="ChiTaRS" id="Ms4a3">
    <property type="organism name" value="mouse"/>
</dbReference>
<dbReference type="PRO" id="PR:Q920C4"/>
<dbReference type="Proteomes" id="UP000000589">
    <property type="component" value="Chromosome 19"/>
</dbReference>
<dbReference type="RNAct" id="Q920C4">
    <property type="molecule type" value="protein"/>
</dbReference>
<dbReference type="Bgee" id="ENSMUSG00000024681">
    <property type="expression patterns" value="Expressed in femorotibial joint and 41 other cell types or tissues"/>
</dbReference>
<dbReference type="ExpressionAtlas" id="Q920C4">
    <property type="expression patterns" value="baseline and differential"/>
</dbReference>
<dbReference type="GO" id="GO:0005737">
    <property type="term" value="C:cytoplasm"/>
    <property type="evidence" value="ECO:0000314"/>
    <property type="project" value="MGI"/>
</dbReference>
<dbReference type="GO" id="GO:0016020">
    <property type="term" value="C:membrane"/>
    <property type="evidence" value="ECO:0000304"/>
    <property type="project" value="MGI"/>
</dbReference>
<dbReference type="InterPro" id="IPR007237">
    <property type="entry name" value="CD20-like"/>
</dbReference>
<dbReference type="InterPro" id="IPR030417">
    <property type="entry name" value="MS4A"/>
</dbReference>
<dbReference type="PANTHER" id="PTHR23320:SF74">
    <property type="entry name" value="MEMBRANE-SPANNING 4-DOMAINS SUBFAMILY A MEMBER 3"/>
    <property type="match status" value="1"/>
</dbReference>
<dbReference type="PANTHER" id="PTHR23320">
    <property type="entry name" value="MEMBRANE-SPANNING 4-DOMAINS SUBFAMILY A MS4A -RELATED"/>
    <property type="match status" value="1"/>
</dbReference>
<dbReference type="Pfam" id="PF04103">
    <property type="entry name" value="CD20"/>
    <property type="match status" value="1"/>
</dbReference>
<name>MS4A3_MOUSE</name>
<protein>
    <recommendedName>
        <fullName>Membrane-spanning 4-domains subfamily A member 3</fullName>
    </recommendedName>
    <alternativeName>
        <fullName>Hematopoietic-specific transmembrane protein 4</fullName>
        <shortName>HTm4</shortName>
    </alternativeName>
</protein>
<gene>
    <name type="primary">Ms4a3</name>
    <name type="synonym">Htm4</name>
</gene>
<sequence length="213" mass="22872">MKPEETGGSVYQPLDESRHVQRGVLQALGAIQILNGILILALGIFLVCLQHVSHHFRHFFFFTFYTGYPLWGAVFFISSGSLTVAAGRNPTRMLMQNSFGINIASTTIAFVGTVFLSVHLAFNTQAFKGCQSSPSPDVCISLGSSSDGLVSLMLILTLLELSVTISISAMWCLGNVCGLREAITSPPNSVESGILPEGSDSENLNTQPQASEE</sequence>